<feature type="signal peptide" evidence="1">
    <location>
        <begin position="1"/>
        <end position="15"/>
    </location>
</feature>
<feature type="chain" id="PRO_0000291334" description="Non-structural protein 8">
    <location>
        <begin position="16"/>
        <end position="121"/>
    </location>
</feature>
<feature type="domain" description="SARS ORF8 Ig-like" evidence="2">
    <location>
        <begin position="19"/>
        <end position="121"/>
    </location>
</feature>
<feature type="disulfide bond" description="Interchain" evidence="2">
    <location>
        <position position="20"/>
    </location>
</feature>
<feature type="disulfide bond" evidence="2">
    <location>
        <begin position="25"/>
        <end position="90"/>
    </location>
</feature>
<feature type="disulfide bond" evidence="2">
    <location>
        <begin position="37"/>
        <end position="102"/>
    </location>
</feature>
<feature type="disulfide bond" evidence="2">
    <location>
        <begin position="61"/>
        <end position="83"/>
    </location>
</feature>
<protein>
    <recommendedName>
        <fullName>Non-structural protein 8</fullName>
        <shortName>ns8</shortName>
    </recommendedName>
    <alternativeName>
        <fullName>Accessory protein 8</fullName>
    </alternativeName>
</protein>
<comment type="miscellaneous">
    <text>This protein corresponds nearly to the fused 8a and 8b proteins of SARS-CoV.</text>
</comment>
<comment type="miscellaneous">
    <text>Bat coronavirus HKU3 is highly similar to SARS-CoV (SARS-like).</text>
</comment>
<name>NS8_BCHK3</name>
<organism>
    <name type="scientific">Bat coronavirus HKU3</name>
    <name type="common">BtCoV</name>
    <name type="synonym">SARS-like coronavirus HKU3</name>
    <dbReference type="NCBI Taxonomy" id="442736"/>
    <lineage>
        <taxon>Viruses</taxon>
        <taxon>Riboviria</taxon>
        <taxon>Orthornavirae</taxon>
        <taxon>Pisuviricota</taxon>
        <taxon>Pisoniviricetes</taxon>
        <taxon>Nidovirales</taxon>
        <taxon>Cornidovirineae</taxon>
        <taxon>Coronaviridae</taxon>
        <taxon>Orthocoronavirinae</taxon>
        <taxon>Betacoronavirus</taxon>
        <taxon>Sarbecovirus</taxon>
        <taxon>Severe acute respiratory syndrome coronavirus</taxon>
    </lineage>
</organism>
<dbReference type="EMBL" id="DQ022305">
    <property type="protein sequence ID" value="AAY88873.1"/>
    <property type="molecule type" value="Genomic_RNA"/>
</dbReference>
<dbReference type="SMR" id="Q3LZX5"/>
<dbReference type="Proteomes" id="UP000007450">
    <property type="component" value="Segment"/>
</dbReference>
<dbReference type="CDD" id="cd21643">
    <property type="entry name" value="ORF8-Ig_bat_SARS-CoV_HKU3-1_type-III-like"/>
    <property type="match status" value="1"/>
</dbReference>
<dbReference type="InterPro" id="IPR044393">
    <property type="entry name" value="ORF8_bat_SARS-CoV_HKU3-1-like"/>
</dbReference>
<dbReference type="InterPro" id="IPR022722">
    <property type="entry name" value="ORF8_betacoronavirus"/>
</dbReference>
<dbReference type="InterPro" id="IPR046444">
    <property type="entry name" value="SARS_ORF8_IG"/>
</dbReference>
<dbReference type="Pfam" id="PF12093">
    <property type="entry name" value="bCoV_NS8"/>
    <property type="match status" value="1"/>
</dbReference>
<dbReference type="PROSITE" id="PS51964">
    <property type="entry name" value="SARS_ORF8_IG"/>
    <property type="match status" value="1"/>
</dbReference>
<evidence type="ECO:0000255" key="1"/>
<evidence type="ECO:0000255" key="2">
    <source>
        <dbReference type="PROSITE-ProRule" id="PRU01309"/>
    </source>
</evidence>
<reference key="1">
    <citation type="journal article" date="2005" name="Proc. Natl. Acad. Sci. U.S.A.">
        <title>Severe acute respiratory syndrome coronavirus-like virus in Chinese horseshoe bats.</title>
        <authorList>
            <person name="Lau S.K.P."/>
            <person name="Woo P.C.Y."/>
            <person name="Li K.S.M."/>
            <person name="Huang Y."/>
            <person name="Tsoi H.-W."/>
            <person name="Wong B.H.L."/>
            <person name="Wong S.S.Y."/>
            <person name="Leung S.-Y."/>
            <person name="Chan K.-H."/>
            <person name="Yuen K.-Y."/>
        </authorList>
    </citation>
    <scope>NUCLEOTIDE SEQUENCE [GENOMIC RNA]</scope>
    <source>
        <strain>Isolate HKU3-1</strain>
    </source>
</reference>
<keyword id="KW-1015">Disulfide bond</keyword>
<keyword id="KW-0732">Signal</keyword>
<accession>Q3LZX5</accession>
<organismHost>
    <name type="scientific">Rhinolophus sinicus</name>
    <name type="common">Chinese rufous horseshoe bat</name>
    <dbReference type="NCBI Taxonomy" id="89399"/>
</organismHost>
<sequence>MKLLIVFGLLASVYCFHRECSIQECCENQPYQIEDPCPIHYYSDWFIKIGSRKSARLVQLCEGDYGRRIPIHYEMFGNYTISCEPLEINCQAPPVGSLIVRCSYDYDFVEHHDVRVVLDFI</sequence>
<proteinExistence type="inferred from homology"/>
<gene>
    <name type="ORF">8</name>
</gene>